<accession>Q493C3</accession>
<keyword id="KW-0143">Chaperone</keyword>
<keyword id="KW-0574">Periplasm</keyword>
<keyword id="KW-1185">Reference proteome</keyword>
<keyword id="KW-0732">Signal</keyword>
<name>SKP_BLOPB</name>
<evidence type="ECO:0000250" key="1"/>
<evidence type="ECO:0000255" key="2"/>
<evidence type="ECO:0000305" key="3"/>
<comment type="function">
    <text evidence="1">Molecular chaperone that interacts specifically with outer membrane proteins, thus maintaining the solubility of early folding intermediates during passage through the periplasm.</text>
</comment>
<comment type="subunit">
    <text evidence="1">Homotrimer.</text>
</comment>
<comment type="subcellular location">
    <subcellularLocation>
        <location evidence="1">Periplasm</location>
    </subcellularLocation>
</comment>
<comment type="similarity">
    <text evidence="3">Belongs to the Skp family.</text>
</comment>
<organism>
    <name type="scientific">Blochmanniella pennsylvanica (strain BPEN)</name>
    <dbReference type="NCBI Taxonomy" id="291272"/>
    <lineage>
        <taxon>Bacteria</taxon>
        <taxon>Pseudomonadati</taxon>
        <taxon>Pseudomonadota</taxon>
        <taxon>Gammaproteobacteria</taxon>
        <taxon>Enterobacterales</taxon>
        <taxon>Enterobacteriaceae</taxon>
        <taxon>ant endosymbionts</taxon>
        <taxon>Candidatus Blochmanniella</taxon>
    </lineage>
</organism>
<feature type="signal peptide" evidence="2">
    <location>
        <begin position="1"/>
        <end position="22"/>
    </location>
</feature>
<feature type="chain" id="PRO_0000227887" description="Chaperone protein Skp">
    <location>
        <begin position="23"/>
        <end position="166"/>
    </location>
</feature>
<feature type="region of interest" description="Lipopolysaccharide binding" evidence="2">
    <location>
        <begin position="102"/>
        <end position="113"/>
    </location>
</feature>
<sequence>MKKWTYILSMVIWITQISPVDAEDKIAIVNISNIFQQSSQRAKIIKQLEYEFKDRATELEKMEHDLQMKIQTLQRDGATMKTIERSELEKSLINQREIFSNKAKEFQQENHSRQTEERDKILNMIQNVVTNVAKKENYDIVIDTNAVLYHSIRVTDITNSVMKQVG</sequence>
<protein>
    <recommendedName>
        <fullName>Chaperone protein Skp</fullName>
    </recommendedName>
</protein>
<gene>
    <name type="primary">skp</name>
    <name type="ordered locus">BPEN_288</name>
</gene>
<dbReference type="EMBL" id="CP000016">
    <property type="protein sequence ID" value="AAZ40919.1"/>
    <property type="molecule type" value="Genomic_DNA"/>
</dbReference>
<dbReference type="RefSeq" id="WP_011282826.1">
    <property type="nucleotide sequence ID" value="NC_007292.1"/>
</dbReference>
<dbReference type="SMR" id="Q493C3"/>
<dbReference type="STRING" id="291272.BPEN_288"/>
<dbReference type="KEGG" id="bpn:BPEN_288"/>
<dbReference type="eggNOG" id="COG2825">
    <property type="taxonomic scope" value="Bacteria"/>
</dbReference>
<dbReference type="HOGENOM" id="CLU_101388_2_0_6"/>
<dbReference type="OrthoDB" id="7061584at2"/>
<dbReference type="Proteomes" id="UP000007794">
    <property type="component" value="Chromosome"/>
</dbReference>
<dbReference type="GO" id="GO:0005829">
    <property type="term" value="C:cytosol"/>
    <property type="evidence" value="ECO:0007669"/>
    <property type="project" value="TreeGrafter"/>
</dbReference>
<dbReference type="GO" id="GO:0042597">
    <property type="term" value="C:periplasmic space"/>
    <property type="evidence" value="ECO:0007669"/>
    <property type="project" value="UniProtKB-SubCell"/>
</dbReference>
<dbReference type="GO" id="GO:0051082">
    <property type="term" value="F:unfolded protein binding"/>
    <property type="evidence" value="ECO:0007669"/>
    <property type="project" value="InterPro"/>
</dbReference>
<dbReference type="GO" id="GO:0061077">
    <property type="term" value="P:chaperone-mediated protein folding"/>
    <property type="evidence" value="ECO:0007669"/>
    <property type="project" value="TreeGrafter"/>
</dbReference>
<dbReference type="GO" id="GO:0050821">
    <property type="term" value="P:protein stabilization"/>
    <property type="evidence" value="ECO:0007669"/>
    <property type="project" value="TreeGrafter"/>
</dbReference>
<dbReference type="Gene3D" id="3.30.910.20">
    <property type="entry name" value="Skp domain"/>
    <property type="match status" value="1"/>
</dbReference>
<dbReference type="InterPro" id="IPR005632">
    <property type="entry name" value="Chaperone_Skp"/>
</dbReference>
<dbReference type="InterPro" id="IPR024930">
    <property type="entry name" value="Skp_dom_sf"/>
</dbReference>
<dbReference type="PANTHER" id="PTHR35089">
    <property type="entry name" value="CHAPERONE PROTEIN SKP"/>
    <property type="match status" value="1"/>
</dbReference>
<dbReference type="PANTHER" id="PTHR35089:SF1">
    <property type="entry name" value="CHAPERONE PROTEIN SKP"/>
    <property type="match status" value="1"/>
</dbReference>
<dbReference type="Pfam" id="PF03938">
    <property type="entry name" value="OmpH"/>
    <property type="match status" value="1"/>
</dbReference>
<dbReference type="PIRSF" id="PIRSF002094">
    <property type="entry name" value="OMP26_Skp"/>
    <property type="match status" value="1"/>
</dbReference>
<dbReference type="SMART" id="SM00935">
    <property type="entry name" value="OmpH"/>
    <property type="match status" value="1"/>
</dbReference>
<dbReference type="SUPFAM" id="SSF111384">
    <property type="entry name" value="OmpH-like"/>
    <property type="match status" value="1"/>
</dbReference>
<proteinExistence type="inferred from homology"/>
<reference key="1">
    <citation type="journal article" date="2005" name="Genome Res.">
        <title>Genome sequence of Blochmannia pennsylvanicus indicates parallel evolutionary trends among bacterial mutualists of insects.</title>
        <authorList>
            <person name="Degnan P.H."/>
            <person name="Lazarus A.B."/>
            <person name="Wernegreen J.J."/>
        </authorList>
    </citation>
    <scope>NUCLEOTIDE SEQUENCE [LARGE SCALE GENOMIC DNA]</scope>
    <source>
        <strain>BPEN</strain>
    </source>
</reference>